<organism>
    <name type="scientific">Streptococcus thermophilus (strain ATCC BAA-491 / LMD-9)</name>
    <dbReference type="NCBI Taxonomy" id="322159"/>
    <lineage>
        <taxon>Bacteria</taxon>
        <taxon>Bacillati</taxon>
        <taxon>Bacillota</taxon>
        <taxon>Bacilli</taxon>
        <taxon>Lactobacillales</taxon>
        <taxon>Streptococcaceae</taxon>
        <taxon>Streptococcus</taxon>
    </lineage>
</organism>
<name>UREF_STRTD</name>
<gene>
    <name evidence="1" type="primary">ureF</name>
    <name type="ordered locus">STER_0327</name>
</gene>
<sequence>MNINPFANVSLQDYLEIVQIVDSTFPIGSFNHSFGMENYLREDTVTDDKGYEEWQEAYLASQFKYGEGLVIKLVYDAMVTDNIDQVWYYDKVLTVSTQARETRQGTKMIAKQMLRLIQRLHAIPVLDDYQSKIRKGVAFGNPAIVFALYVFNKGLGCNEAIALYGYSVISTMVQNAVRAIPLGQFAGQEIVLRSFSQLEKMTQEIQELDASYLGANTPGLELAQMKHETQVFRLFMS</sequence>
<protein>
    <recommendedName>
        <fullName evidence="1">Urease accessory protein UreF</fullName>
    </recommendedName>
</protein>
<feature type="chain" id="PRO_1000145142" description="Urease accessory protein UreF">
    <location>
        <begin position="1"/>
        <end position="237"/>
    </location>
</feature>
<comment type="function">
    <text evidence="1">Required for maturation of urease via the functional incorporation of the urease nickel metallocenter.</text>
</comment>
<comment type="subunit">
    <text evidence="1">UreD, UreF and UreG form a complex that acts as a GTP-hydrolysis-dependent molecular chaperone, activating the urease apoprotein by helping to assemble the nickel containing metallocenter of UreC. The UreE protein probably delivers the nickel.</text>
</comment>
<comment type="subcellular location">
    <subcellularLocation>
        <location evidence="1">Cytoplasm</location>
    </subcellularLocation>
</comment>
<comment type="similarity">
    <text evidence="1">Belongs to the UreF family.</text>
</comment>
<dbReference type="EMBL" id="CP000419">
    <property type="protein sequence ID" value="ABJ65631.1"/>
    <property type="molecule type" value="Genomic_DNA"/>
</dbReference>
<dbReference type="RefSeq" id="WP_002946398.1">
    <property type="nucleotide sequence ID" value="NZ_CP086001.1"/>
</dbReference>
<dbReference type="SMR" id="Q03ME1"/>
<dbReference type="KEGG" id="ste:STER_0327"/>
<dbReference type="HOGENOM" id="CLU_049215_4_2_9"/>
<dbReference type="GO" id="GO:0005737">
    <property type="term" value="C:cytoplasm"/>
    <property type="evidence" value="ECO:0007669"/>
    <property type="project" value="UniProtKB-SubCell"/>
</dbReference>
<dbReference type="GO" id="GO:0016151">
    <property type="term" value="F:nickel cation binding"/>
    <property type="evidence" value="ECO:0007669"/>
    <property type="project" value="UniProtKB-UniRule"/>
</dbReference>
<dbReference type="Gene3D" id="1.10.4190.10">
    <property type="entry name" value="Urease accessory protein UreF"/>
    <property type="match status" value="1"/>
</dbReference>
<dbReference type="HAMAP" id="MF_01385">
    <property type="entry name" value="UreF"/>
    <property type="match status" value="1"/>
</dbReference>
<dbReference type="InterPro" id="IPR002639">
    <property type="entry name" value="UreF"/>
</dbReference>
<dbReference type="InterPro" id="IPR038277">
    <property type="entry name" value="UreF_sf"/>
</dbReference>
<dbReference type="PANTHER" id="PTHR33620">
    <property type="entry name" value="UREASE ACCESSORY PROTEIN F"/>
    <property type="match status" value="1"/>
</dbReference>
<dbReference type="PANTHER" id="PTHR33620:SF1">
    <property type="entry name" value="UREASE ACCESSORY PROTEIN F"/>
    <property type="match status" value="1"/>
</dbReference>
<dbReference type="Pfam" id="PF01730">
    <property type="entry name" value="UreF"/>
    <property type="match status" value="1"/>
</dbReference>
<dbReference type="PIRSF" id="PIRSF009467">
    <property type="entry name" value="Ureas_acces_UreF"/>
    <property type="match status" value="1"/>
</dbReference>
<keyword id="KW-0143">Chaperone</keyword>
<keyword id="KW-0963">Cytoplasm</keyword>
<keyword id="KW-0996">Nickel insertion</keyword>
<evidence type="ECO:0000255" key="1">
    <source>
        <dbReference type="HAMAP-Rule" id="MF_01385"/>
    </source>
</evidence>
<proteinExistence type="inferred from homology"/>
<accession>Q03ME1</accession>
<reference key="1">
    <citation type="journal article" date="2006" name="Proc. Natl. Acad. Sci. U.S.A.">
        <title>Comparative genomics of the lactic acid bacteria.</title>
        <authorList>
            <person name="Makarova K.S."/>
            <person name="Slesarev A."/>
            <person name="Wolf Y.I."/>
            <person name="Sorokin A."/>
            <person name="Mirkin B."/>
            <person name="Koonin E.V."/>
            <person name="Pavlov A."/>
            <person name="Pavlova N."/>
            <person name="Karamychev V."/>
            <person name="Polouchine N."/>
            <person name="Shakhova V."/>
            <person name="Grigoriev I."/>
            <person name="Lou Y."/>
            <person name="Rohksar D."/>
            <person name="Lucas S."/>
            <person name="Huang K."/>
            <person name="Goodstein D.M."/>
            <person name="Hawkins T."/>
            <person name="Plengvidhya V."/>
            <person name="Welker D."/>
            <person name="Hughes J."/>
            <person name="Goh Y."/>
            <person name="Benson A."/>
            <person name="Baldwin K."/>
            <person name="Lee J.-H."/>
            <person name="Diaz-Muniz I."/>
            <person name="Dosti B."/>
            <person name="Smeianov V."/>
            <person name="Wechter W."/>
            <person name="Barabote R."/>
            <person name="Lorca G."/>
            <person name="Altermann E."/>
            <person name="Barrangou R."/>
            <person name="Ganesan B."/>
            <person name="Xie Y."/>
            <person name="Rawsthorne H."/>
            <person name="Tamir D."/>
            <person name="Parker C."/>
            <person name="Breidt F."/>
            <person name="Broadbent J.R."/>
            <person name="Hutkins R."/>
            <person name="O'Sullivan D."/>
            <person name="Steele J."/>
            <person name="Unlu G."/>
            <person name="Saier M.H. Jr."/>
            <person name="Klaenhammer T."/>
            <person name="Richardson P."/>
            <person name="Kozyavkin S."/>
            <person name="Weimer B.C."/>
            <person name="Mills D.A."/>
        </authorList>
    </citation>
    <scope>NUCLEOTIDE SEQUENCE [LARGE SCALE GENOMIC DNA]</scope>
    <source>
        <strain>ATCC BAA-491 / LMD-9</strain>
    </source>
</reference>